<sequence length="365" mass="41727">LVPLFVFILFLHKCFFTTSNNNKKLPPSPRKLPIIGNLHQLGLHPHRSLHKLSKKYGPVMLLHLGSKPVIVASSVEAVRDIMKTNDLVWSNRPKSKMADRLIYGSKDVSFSPHGEYWRQIRSITVLHLLSNKRVQSYRAAREEETSNMIEKLKQMSNSSSSATDLRDLFCWLAYNIINRVALGKKYNDEIDAKATLDKFVELLGTFNVGDYIPCLEWVNKITGFDSKVDKVAKDLDTFLEFVIEAHMIRNEKEENRAGESKDLVDVLLEIQNGKETGFPIQRDSLKALLLDPFSAGTDTIYTVLEWTMTELLRHPRAMEKLQNEVQGLAQEKAEITEDDLPNMHYLKAVIKETLRLHPPIPLLLP</sequence>
<organism>
    <name type="scientific">Solanum melongena</name>
    <name type="common">Eggplant</name>
    <name type="synonym">Aubergine</name>
    <dbReference type="NCBI Taxonomy" id="223891"/>
    <lineage>
        <taxon>Eukaryota</taxon>
        <taxon>Viridiplantae</taxon>
        <taxon>Streptophyta</taxon>
        <taxon>Embryophyta</taxon>
        <taxon>Tracheophyta</taxon>
        <taxon>Spermatophyta</taxon>
        <taxon>Magnoliopsida</taxon>
        <taxon>eudicotyledons</taxon>
        <taxon>Gunneridae</taxon>
        <taxon>Pentapetalae</taxon>
        <taxon>asterids</taxon>
        <taxon>lamiids</taxon>
        <taxon>Solanales</taxon>
        <taxon>Solanaceae</taxon>
        <taxon>Solanoideae</taxon>
        <taxon>Solaneae</taxon>
        <taxon>Solanum</taxon>
    </lineage>
</organism>
<proteinExistence type="evidence at transcript level"/>
<gene>
    <name type="primary">CYP71A3</name>
    <name type="synonym">CYPEG3</name>
</gene>
<dbReference type="EC" id="1.14.-.-"/>
<dbReference type="EMBL" id="X70982">
    <property type="protein sequence ID" value="CAA50313.1"/>
    <property type="molecule type" value="mRNA"/>
</dbReference>
<dbReference type="PIR" id="S36807">
    <property type="entry name" value="S36807"/>
</dbReference>
<dbReference type="SMR" id="P37119"/>
<dbReference type="GO" id="GO:0020037">
    <property type="term" value="F:heme binding"/>
    <property type="evidence" value="ECO:0007669"/>
    <property type="project" value="InterPro"/>
</dbReference>
<dbReference type="GO" id="GO:0005506">
    <property type="term" value="F:iron ion binding"/>
    <property type="evidence" value="ECO:0007669"/>
    <property type="project" value="InterPro"/>
</dbReference>
<dbReference type="GO" id="GO:0004497">
    <property type="term" value="F:monooxygenase activity"/>
    <property type="evidence" value="ECO:0007669"/>
    <property type="project" value="UniProtKB-KW"/>
</dbReference>
<dbReference type="GO" id="GO:0016705">
    <property type="term" value="F:oxidoreductase activity, acting on paired donors, with incorporation or reduction of molecular oxygen"/>
    <property type="evidence" value="ECO:0007669"/>
    <property type="project" value="InterPro"/>
</dbReference>
<dbReference type="Gene3D" id="1.10.630.10">
    <property type="entry name" value="Cytochrome P450"/>
    <property type="match status" value="1"/>
</dbReference>
<dbReference type="InterPro" id="IPR001128">
    <property type="entry name" value="Cyt_P450"/>
</dbReference>
<dbReference type="InterPro" id="IPR002401">
    <property type="entry name" value="Cyt_P450_E_grp-I"/>
</dbReference>
<dbReference type="InterPro" id="IPR036396">
    <property type="entry name" value="Cyt_P450_sf"/>
</dbReference>
<dbReference type="PANTHER" id="PTHR47955:SF15">
    <property type="entry name" value="CYTOCHROME P450 71A2-LIKE"/>
    <property type="match status" value="1"/>
</dbReference>
<dbReference type="PANTHER" id="PTHR47955">
    <property type="entry name" value="CYTOCHROME P450 FAMILY 71 PROTEIN"/>
    <property type="match status" value="1"/>
</dbReference>
<dbReference type="Pfam" id="PF00067">
    <property type="entry name" value="p450"/>
    <property type="match status" value="1"/>
</dbReference>
<dbReference type="PRINTS" id="PR00463">
    <property type="entry name" value="EP450I"/>
</dbReference>
<dbReference type="PRINTS" id="PR00385">
    <property type="entry name" value="P450"/>
</dbReference>
<dbReference type="SUPFAM" id="SSF48264">
    <property type="entry name" value="Cytochrome P450"/>
    <property type="match status" value="1"/>
</dbReference>
<feature type="chain" id="PRO_0000052058" description="Cytochrome P450 71A3">
    <location>
        <begin position="1" status="less than"/>
        <end position="365" status="greater than"/>
    </location>
</feature>
<feature type="non-terminal residue">
    <location>
        <position position="1"/>
    </location>
</feature>
<feature type="non-terminal residue">
    <location>
        <position position="365"/>
    </location>
</feature>
<reference key="1">
    <citation type="journal article" date="1993" name="FEBS Lett.">
        <title>cDNAs sequences encoding cytochrome P450 (CYP71 family) from eggplant seedlings.</title>
        <authorList>
            <person name="Umemoto N."/>
            <person name="Kobayashi O."/>
            <person name="Ishizaki-Nishizawa O."/>
            <person name="Toguri T."/>
        </authorList>
    </citation>
    <scope>NUCLEOTIDE SEQUENCE [MRNA]</scope>
    <source>
        <strain>cv. Sinsadoharanasu</strain>
        <tissue>Hypocotyl</tissue>
    </source>
</reference>
<protein>
    <recommendedName>
        <fullName>Cytochrome P450 71A3</fullName>
        <ecNumber>1.14.-.-</ecNumber>
    </recommendedName>
    <alternativeName>
        <fullName>CYPLXXIA3</fullName>
    </alternativeName>
    <alternativeName>
        <fullName>Cytochrome P-450EG3</fullName>
    </alternativeName>
</protein>
<name>C71A3_SOLME</name>
<evidence type="ECO:0000250" key="1"/>
<evidence type="ECO:0000305" key="2"/>
<keyword id="KW-0349">Heme</keyword>
<keyword id="KW-0408">Iron</keyword>
<keyword id="KW-0479">Metal-binding</keyword>
<keyword id="KW-0503">Monooxygenase</keyword>
<keyword id="KW-0560">Oxidoreductase</keyword>
<accession>P37119</accession>
<comment type="function">
    <text>May have a role in maturation, such as during flavor formation or other metabolite production specific to aging tissues.</text>
</comment>
<comment type="cofactor">
    <cofactor evidence="1">
        <name>heme</name>
        <dbReference type="ChEBI" id="CHEBI:30413"/>
    </cofactor>
</comment>
<comment type="similarity">
    <text evidence="2">Belongs to the cytochrome P450 family.</text>
</comment>